<organism>
    <name type="scientific">Shewanella pealeana (strain ATCC 700345 / ANG-SQ1)</name>
    <dbReference type="NCBI Taxonomy" id="398579"/>
    <lineage>
        <taxon>Bacteria</taxon>
        <taxon>Pseudomonadati</taxon>
        <taxon>Pseudomonadota</taxon>
        <taxon>Gammaproteobacteria</taxon>
        <taxon>Alteromonadales</taxon>
        <taxon>Shewanellaceae</taxon>
        <taxon>Shewanella</taxon>
    </lineage>
</organism>
<reference key="1">
    <citation type="submission" date="2007-10" db="EMBL/GenBank/DDBJ databases">
        <title>Complete sequence of Shewanella pealeana ATCC 700345.</title>
        <authorList>
            <consortium name="US DOE Joint Genome Institute"/>
            <person name="Copeland A."/>
            <person name="Lucas S."/>
            <person name="Lapidus A."/>
            <person name="Barry K."/>
            <person name="Glavina del Rio T."/>
            <person name="Dalin E."/>
            <person name="Tice H."/>
            <person name="Pitluck S."/>
            <person name="Chertkov O."/>
            <person name="Brettin T."/>
            <person name="Bruce D."/>
            <person name="Detter J.C."/>
            <person name="Han C."/>
            <person name="Schmutz J."/>
            <person name="Larimer F."/>
            <person name="Land M."/>
            <person name="Hauser L."/>
            <person name="Kyrpides N."/>
            <person name="Kim E."/>
            <person name="Zhao J.-S.Z."/>
            <person name="Manno D."/>
            <person name="Hawari J."/>
            <person name="Richardson P."/>
        </authorList>
    </citation>
    <scope>NUCLEOTIDE SEQUENCE [LARGE SCALE GENOMIC DNA]</scope>
    <source>
        <strain>ATCC 700345 / ANG-SQ1</strain>
    </source>
</reference>
<comment type="function">
    <text evidence="1">Involved in mRNA degradation. Catalyzes the phosphorolysis of single-stranded polyribonucleotides processively in the 3'- to 5'-direction.</text>
</comment>
<comment type="catalytic activity">
    <reaction evidence="1">
        <text>RNA(n+1) + phosphate = RNA(n) + a ribonucleoside 5'-diphosphate</text>
        <dbReference type="Rhea" id="RHEA:22096"/>
        <dbReference type="Rhea" id="RHEA-COMP:14527"/>
        <dbReference type="Rhea" id="RHEA-COMP:17342"/>
        <dbReference type="ChEBI" id="CHEBI:43474"/>
        <dbReference type="ChEBI" id="CHEBI:57930"/>
        <dbReference type="ChEBI" id="CHEBI:140395"/>
        <dbReference type="EC" id="2.7.7.8"/>
    </reaction>
</comment>
<comment type="cofactor">
    <cofactor evidence="1">
        <name>Mg(2+)</name>
        <dbReference type="ChEBI" id="CHEBI:18420"/>
    </cofactor>
</comment>
<comment type="subunit">
    <text evidence="1">Component of the RNA degradosome, which is a multiprotein complex involved in RNA processing and mRNA degradation.</text>
</comment>
<comment type="subcellular location">
    <subcellularLocation>
        <location evidence="1">Cytoplasm</location>
    </subcellularLocation>
</comment>
<comment type="similarity">
    <text evidence="1">Belongs to the polyribonucleotide nucleotidyltransferase family.</text>
</comment>
<protein>
    <recommendedName>
        <fullName evidence="1">Polyribonucleotide nucleotidyltransferase</fullName>
        <ecNumber evidence="1">2.7.7.8</ecNumber>
    </recommendedName>
    <alternativeName>
        <fullName evidence="1">Polynucleotide phosphorylase</fullName>
        <shortName evidence="1">PNPase</shortName>
    </alternativeName>
</protein>
<keyword id="KW-0963">Cytoplasm</keyword>
<keyword id="KW-0460">Magnesium</keyword>
<keyword id="KW-0479">Metal-binding</keyword>
<keyword id="KW-0548">Nucleotidyltransferase</keyword>
<keyword id="KW-1185">Reference proteome</keyword>
<keyword id="KW-0694">RNA-binding</keyword>
<keyword id="KW-0808">Transferase</keyword>
<gene>
    <name evidence="1" type="primary">pnp</name>
    <name type="ordered locus">Spea_3055</name>
</gene>
<proteinExistence type="inferred from homology"/>
<accession>A8H735</accession>
<evidence type="ECO:0000255" key="1">
    <source>
        <dbReference type="HAMAP-Rule" id="MF_01595"/>
    </source>
</evidence>
<dbReference type="EC" id="2.7.7.8" evidence="1"/>
<dbReference type="EMBL" id="CP000851">
    <property type="protein sequence ID" value="ABV88372.1"/>
    <property type="molecule type" value="Genomic_DNA"/>
</dbReference>
<dbReference type="SMR" id="A8H735"/>
<dbReference type="STRING" id="398579.Spea_3055"/>
<dbReference type="KEGG" id="spl:Spea_3055"/>
<dbReference type="eggNOG" id="COG1185">
    <property type="taxonomic scope" value="Bacteria"/>
</dbReference>
<dbReference type="HOGENOM" id="CLU_004217_2_2_6"/>
<dbReference type="Proteomes" id="UP000002608">
    <property type="component" value="Chromosome"/>
</dbReference>
<dbReference type="GO" id="GO:0005829">
    <property type="term" value="C:cytosol"/>
    <property type="evidence" value="ECO:0007669"/>
    <property type="project" value="TreeGrafter"/>
</dbReference>
<dbReference type="GO" id="GO:0000175">
    <property type="term" value="F:3'-5'-RNA exonuclease activity"/>
    <property type="evidence" value="ECO:0007669"/>
    <property type="project" value="TreeGrafter"/>
</dbReference>
<dbReference type="GO" id="GO:0000287">
    <property type="term" value="F:magnesium ion binding"/>
    <property type="evidence" value="ECO:0007669"/>
    <property type="project" value="UniProtKB-UniRule"/>
</dbReference>
<dbReference type="GO" id="GO:0004654">
    <property type="term" value="F:polyribonucleotide nucleotidyltransferase activity"/>
    <property type="evidence" value="ECO:0007669"/>
    <property type="project" value="UniProtKB-UniRule"/>
</dbReference>
<dbReference type="GO" id="GO:0003723">
    <property type="term" value="F:RNA binding"/>
    <property type="evidence" value="ECO:0007669"/>
    <property type="project" value="UniProtKB-UniRule"/>
</dbReference>
<dbReference type="GO" id="GO:0006402">
    <property type="term" value="P:mRNA catabolic process"/>
    <property type="evidence" value="ECO:0007669"/>
    <property type="project" value="UniProtKB-UniRule"/>
</dbReference>
<dbReference type="GO" id="GO:0006396">
    <property type="term" value="P:RNA processing"/>
    <property type="evidence" value="ECO:0007669"/>
    <property type="project" value="InterPro"/>
</dbReference>
<dbReference type="CDD" id="cd02393">
    <property type="entry name" value="KH-I_PNPase"/>
    <property type="match status" value="1"/>
</dbReference>
<dbReference type="CDD" id="cd11363">
    <property type="entry name" value="RNase_PH_PNPase_1"/>
    <property type="match status" value="1"/>
</dbReference>
<dbReference type="CDD" id="cd11364">
    <property type="entry name" value="RNase_PH_PNPase_2"/>
    <property type="match status" value="1"/>
</dbReference>
<dbReference type="CDD" id="cd04472">
    <property type="entry name" value="S1_PNPase"/>
    <property type="match status" value="1"/>
</dbReference>
<dbReference type="FunFam" id="2.40.50.140:FF:000023">
    <property type="entry name" value="Polyribonucleotide nucleotidyltransferase"/>
    <property type="match status" value="1"/>
</dbReference>
<dbReference type="FunFam" id="3.30.1370.10:FF:000001">
    <property type="entry name" value="Polyribonucleotide nucleotidyltransferase"/>
    <property type="match status" value="1"/>
</dbReference>
<dbReference type="FunFam" id="3.30.230.70:FF:000001">
    <property type="entry name" value="Polyribonucleotide nucleotidyltransferase"/>
    <property type="match status" value="1"/>
</dbReference>
<dbReference type="FunFam" id="3.30.230.70:FF:000002">
    <property type="entry name" value="Polyribonucleotide nucleotidyltransferase"/>
    <property type="match status" value="1"/>
</dbReference>
<dbReference type="Gene3D" id="3.30.230.70">
    <property type="entry name" value="GHMP Kinase, N-terminal domain"/>
    <property type="match status" value="2"/>
</dbReference>
<dbReference type="Gene3D" id="3.30.1370.10">
    <property type="entry name" value="K Homology domain, type 1"/>
    <property type="match status" value="1"/>
</dbReference>
<dbReference type="Gene3D" id="2.40.50.140">
    <property type="entry name" value="Nucleic acid-binding proteins"/>
    <property type="match status" value="1"/>
</dbReference>
<dbReference type="HAMAP" id="MF_01595">
    <property type="entry name" value="PNPase"/>
    <property type="match status" value="1"/>
</dbReference>
<dbReference type="InterPro" id="IPR001247">
    <property type="entry name" value="ExoRNase_PH_dom1"/>
</dbReference>
<dbReference type="InterPro" id="IPR015847">
    <property type="entry name" value="ExoRNase_PH_dom2"/>
</dbReference>
<dbReference type="InterPro" id="IPR036345">
    <property type="entry name" value="ExoRNase_PH_dom2_sf"/>
</dbReference>
<dbReference type="InterPro" id="IPR004087">
    <property type="entry name" value="KH_dom"/>
</dbReference>
<dbReference type="InterPro" id="IPR004088">
    <property type="entry name" value="KH_dom_type_1"/>
</dbReference>
<dbReference type="InterPro" id="IPR036612">
    <property type="entry name" value="KH_dom_type_1_sf"/>
</dbReference>
<dbReference type="InterPro" id="IPR012340">
    <property type="entry name" value="NA-bd_OB-fold"/>
</dbReference>
<dbReference type="InterPro" id="IPR012162">
    <property type="entry name" value="PNPase"/>
</dbReference>
<dbReference type="InterPro" id="IPR027408">
    <property type="entry name" value="PNPase/RNase_PH_dom_sf"/>
</dbReference>
<dbReference type="InterPro" id="IPR015848">
    <property type="entry name" value="PNPase_PH_RNA-bd_bac/org-type"/>
</dbReference>
<dbReference type="InterPro" id="IPR036456">
    <property type="entry name" value="PNPase_PH_RNA-bd_sf"/>
</dbReference>
<dbReference type="InterPro" id="IPR020568">
    <property type="entry name" value="Ribosomal_Su5_D2-typ_SF"/>
</dbReference>
<dbReference type="InterPro" id="IPR003029">
    <property type="entry name" value="S1_domain"/>
</dbReference>
<dbReference type="NCBIfam" id="TIGR03591">
    <property type="entry name" value="polynuc_phos"/>
    <property type="match status" value="1"/>
</dbReference>
<dbReference type="NCBIfam" id="NF008805">
    <property type="entry name" value="PRK11824.1"/>
    <property type="match status" value="1"/>
</dbReference>
<dbReference type="PANTHER" id="PTHR11252">
    <property type="entry name" value="POLYRIBONUCLEOTIDE NUCLEOTIDYLTRANSFERASE"/>
    <property type="match status" value="1"/>
</dbReference>
<dbReference type="PANTHER" id="PTHR11252:SF0">
    <property type="entry name" value="POLYRIBONUCLEOTIDE NUCLEOTIDYLTRANSFERASE 1, MITOCHONDRIAL"/>
    <property type="match status" value="1"/>
</dbReference>
<dbReference type="Pfam" id="PF00013">
    <property type="entry name" value="KH_1"/>
    <property type="match status" value="1"/>
</dbReference>
<dbReference type="Pfam" id="PF03726">
    <property type="entry name" value="PNPase"/>
    <property type="match status" value="1"/>
</dbReference>
<dbReference type="Pfam" id="PF01138">
    <property type="entry name" value="RNase_PH"/>
    <property type="match status" value="2"/>
</dbReference>
<dbReference type="Pfam" id="PF03725">
    <property type="entry name" value="RNase_PH_C"/>
    <property type="match status" value="2"/>
</dbReference>
<dbReference type="Pfam" id="PF00575">
    <property type="entry name" value="S1"/>
    <property type="match status" value="1"/>
</dbReference>
<dbReference type="PIRSF" id="PIRSF005499">
    <property type="entry name" value="PNPase"/>
    <property type="match status" value="1"/>
</dbReference>
<dbReference type="SMART" id="SM00322">
    <property type="entry name" value="KH"/>
    <property type="match status" value="1"/>
</dbReference>
<dbReference type="SMART" id="SM00316">
    <property type="entry name" value="S1"/>
    <property type="match status" value="1"/>
</dbReference>
<dbReference type="SUPFAM" id="SSF54791">
    <property type="entry name" value="Eukaryotic type KH-domain (KH-domain type I)"/>
    <property type="match status" value="1"/>
</dbReference>
<dbReference type="SUPFAM" id="SSF50249">
    <property type="entry name" value="Nucleic acid-binding proteins"/>
    <property type="match status" value="1"/>
</dbReference>
<dbReference type="SUPFAM" id="SSF46915">
    <property type="entry name" value="Polynucleotide phosphorylase/guanosine pentaphosphate synthase (PNPase/GPSI), domain 3"/>
    <property type="match status" value="1"/>
</dbReference>
<dbReference type="SUPFAM" id="SSF55666">
    <property type="entry name" value="Ribonuclease PH domain 2-like"/>
    <property type="match status" value="2"/>
</dbReference>
<dbReference type="SUPFAM" id="SSF54211">
    <property type="entry name" value="Ribosomal protein S5 domain 2-like"/>
    <property type="match status" value="2"/>
</dbReference>
<dbReference type="PROSITE" id="PS50084">
    <property type="entry name" value="KH_TYPE_1"/>
    <property type="match status" value="1"/>
</dbReference>
<dbReference type="PROSITE" id="PS50126">
    <property type="entry name" value="S1"/>
    <property type="match status" value="1"/>
</dbReference>
<feature type="chain" id="PRO_0000381919" description="Polyribonucleotide nucleotidyltransferase">
    <location>
        <begin position="1"/>
        <end position="704"/>
    </location>
</feature>
<feature type="domain" description="KH" evidence="1">
    <location>
        <begin position="555"/>
        <end position="614"/>
    </location>
</feature>
<feature type="domain" description="S1 motif" evidence="1">
    <location>
        <begin position="624"/>
        <end position="692"/>
    </location>
</feature>
<feature type="binding site" evidence="1">
    <location>
        <position position="488"/>
    </location>
    <ligand>
        <name>Mg(2+)</name>
        <dbReference type="ChEBI" id="CHEBI:18420"/>
    </ligand>
</feature>
<feature type="binding site" evidence="1">
    <location>
        <position position="494"/>
    </location>
    <ligand>
        <name>Mg(2+)</name>
        <dbReference type="ChEBI" id="CHEBI:18420"/>
    </ligand>
</feature>
<name>PNP_SHEPA</name>
<sequence>MVHVNPIVKSFQYGQHTVTLETGVIARQADAAVLASMGDTTVLVTVVGKKFEEPGRDFFPLTVNYQEKTYAAGKIPGGFFKREGRPSEGETLTARLIDRPIRPLFPNGFKNEVQVIITVVSVDPEISPEVISMIGTSAALSISGIPFNGPLGSARVGYVNGEYILNPTVSQLVDSQLELSVAGTESAVLMVESEASALPEEVMLGAVVYGHDQQQVVIQAIKELQAEVNKPVWDWSAPAQDETLVAKIKDLAEAGLTEAYQIEVKQDRYAQVGVVKNAAKEALLAENPDANTREIDGLLGSLEKKVVRGRIISGQPRIDGREPDMVRALNVMAGVLPRTHGSSLFTRGETQALVTCTLGTERDAQKIDSIMGEYTNRFMLHYNFPPYSVGETGMVGSPKRREIGHGKLAWRGINAVMPTAEEFPYSVRIVSEITESNGSSSMASVCGTSLALMDAGVPIKTSVAGIAMGLVKEGDDFVVLSDILGDEDHLGDMDFKVAGTRDGITALQMDIKIEGITKEIMQIALKQAYGARVHILDVMDRAISGHRGDISEHAPRITTIKINPEKIRDVIGKGGATIRALTEETGTTIELDDDGTVKIASSNGEATKEAIRRIEEITAEVEVGTVYNGKVVRIVDFGAFVTILPGKDGLVHISQIAEERVANVSDYLEVGQEVKVKVMEVDRQGRVRLSMKEAAPKAEAPAAE</sequence>